<evidence type="ECO:0000255" key="1">
    <source>
        <dbReference type="PROSITE-ProRule" id="PRU00981"/>
    </source>
</evidence>
<evidence type="ECO:0000269" key="2">
    <source>
    </source>
</evidence>
<evidence type="ECO:0000305" key="3"/>
<feature type="chain" id="PRO_0000358743" description="Transcription factor bHLH36">
    <location>
        <begin position="1"/>
        <end position="174"/>
    </location>
</feature>
<feature type="domain" description="bHLH" evidence="1">
    <location>
        <begin position="1"/>
        <end position="53"/>
    </location>
</feature>
<feature type="sequence conflict" description="In Ref. 4; AF488575." evidence="3" ref="4">
    <original>L</original>
    <variation>F</variation>
    <location>
        <position position="135"/>
    </location>
</feature>
<feature type="sequence conflict" description="In Ref. 4; AF488575." evidence="3" ref="4">
    <original>E</original>
    <variation>G</variation>
    <location>
        <position position="165"/>
    </location>
</feature>
<protein>
    <recommendedName>
        <fullName>Transcription factor bHLH36</fullName>
    </recommendedName>
    <alternativeName>
        <fullName>Basic helix-loop-helix protein 36</fullName>
        <shortName>AtbHLH36</shortName>
        <shortName>bHLH 36</shortName>
    </alternativeName>
    <alternativeName>
        <fullName>Transcription factor EN 6</fullName>
    </alternativeName>
    <alternativeName>
        <fullName>bHLH transcription factor bHLH036</fullName>
    </alternativeName>
</protein>
<comment type="subunit">
    <text evidence="3">Homodimer.</text>
</comment>
<comment type="subcellular location">
    <subcellularLocation>
        <location evidence="1">Nucleus</location>
    </subcellularLocation>
</comment>
<comment type="tissue specificity">
    <text evidence="2">Expressed constitutively in roots, leaves, stems, and flowers.</text>
</comment>
<gene>
    <name type="primary">BHLH36</name>
    <name type="synonym">EN6</name>
    <name type="ordered locus">At5g51780</name>
    <name type="ORF">MIO24.9</name>
</gene>
<accession>Q9FLI1</accession>
<reference key="1">
    <citation type="journal article" date="1998" name="DNA Res.">
        <title>Structural analysis of Arabidopsis thaliana chromosome 5. IV. Sequence features of the regions of 1,456,315 bp covered by nineteen physically assigned P1 and TAC clones.</title>
        <authorList>
            <person name="Sato S."/>
            <person name="Kaneko T."/>
            <person name="Kotani H."/>
            <person name="Nakamura Y."/>
            <person name="Asamizu E."/>
            <person name="Miyajima N."/>
            <person name="Tabata S."/>
        </authorList>
    </citation>
    <scope>NUCLEOTIDE SEQUENCE [LARGE SCALE GENOMIC DNA]</scope>
    <source>
        <strain>cv. Columbia</strain>
    </source>
</reference>
<reference key="2">
    <citation type="journal article" date="2017" name="Plant J.">
        <title>Araport11: a complete reannotation of the Arabidopsis thaliana reference genome.</title>
        <authorList>
            <person name="Cheng C.Y."/>
            <person name="Krishnakumar V."/>
            <person name="Chan A.P."/>
            <person name="Thibaud-Nissen F."/>
            <person name="Schobel S."/>
            <person name="Town C.D."/>
        </authorList>
    </citation>
    <scope>GENOME REANNOTATION</scope>
    <source>
        <strain>cv. Columbia</strain>
    </source>
</reference>
<reference key="3">
    <citation type="submission" date="2004-02" db="EMBL/GenBank/DDBJ databases">
        <title>Arabidopsis ORF clones.</title>
        <authorList>
            <person name="Kim C.J."/>
            <person name="Chen H."/>
            <person name="Cheuk R.F."/>
            <person name="Shinn P."/>
            <person name="Ecker J.R."/>
        </authorList>
    </citation>
    <scope>NUCLEOTIDE SEQUENCE [LARGE SCALE MRNA]</scope>
    <source>
        <strain>cv. Columbia</strain>
    </source>
</reference>
<reference key="4">
    <citation type="journal article" date="2003" name="Mol. Biol. Evol.">
        <title>The basic helix-loop-helix transcription factor family in plants: a genome-wide study of protein structure and functional diversity.</title>
        <authorList>
            <person name="Heim M.A."/>
            <person name="Jakoby M."/>
            <person name="Werber M."/>
            <person name="Martin C."/>
            <person name="Weisshaar B."/>
            <person name="Bailey P.C."/>
        </authorList>
    </citation>
    <scope>NUCLEOTIDE SEQUENCE [MRNA] OF 16-174</scope>
    <scope>TISSUE SPECIFICITY</scope>
    <scope>GENE FAMILY</scope>
    <scope>NOMENCLATURE</scope>
    <source>
        <strain>cv. Columbia</strain>
    </source>
</reference>
<reference key="5">
    <citation type="journal article" date="2003" name="Plant Cell">
        <title>The Arabidopsis basic/helix-loop-helix transcription factor family.</title>
        <authorList>
            <person name="Toledo-Ortiz G."/>
            <person name="Huq E."/>
            <person name="Quail P.H."/>
        </authorList>
    </citation>
    <scope>GENE FAMILY</scope>
</reference>
<reference key="6">
    <citation type="journal article" date="2003" name="Plant Cell">
        <title>Update on the basic helix-loop-helix transcription factor gene family in Arabidopsis thaliana.</title>
        <authorList>
            <person name="Bailey P.C."/>
            <person name="Martin C."/>
            <person name="Toledo-Ortiz G."/>
            <person name="Quail P.H."/>
            <person name="Huq E."/>
            <person name="Heim M.A."/>
            <person name="Jakoby M."/>
            <person name="Werber M."/>
            <person name="Weisshaar B."/>
        </authorList>
    </citation>
    <scope>GENE FAMILY</scope>
    <scope>NOMENCLATURE</scope>
</reference>
<sequence>MEKMMHRETERQRRQEMASLYASLRSLLPLHFIKGKRSTSDQVNEAVNYIKYLQRKIKELSVRRDDLMVLSRGSLLGSSNGDFKEDVEMISGKNHVVVRQCLVGVEIMLSSRCCGGQPRFSSVLQVLSEYGLCLLNSISSIVDDRLVYTIQAEVNDMALMIDLAELEKRLIRMK</sequence>
<keyword id="KW-0238">DNA-binding</keyword>
<keyword id="KW-0539">Nucleus</keyword>
<keyword id="KW-1185">Reference proteome</keyword>
<keyword id="KW-0804">Transcription</keyword>
<keyword id="KW-0805">Transcription regulation</keyword>
<organism>
    <name type="scientific">Arabidopsis thaliana</name>
    <name type="common">Mouse-ear cress</name>
    <dbReference type="NCBI Taxonomy" id="3702"/>
    <lineage>
        <taxon>Eukaryota</taxon>
        <taxon>Viridiplantae</taxon>
        <taxon>Streptophyta</taxon>
        <taxon>Embryophyta</taxon>
        <taxon>Tracheophyta</taxon>
        <taxon>Spermatophyta</taxon>
        <taxon>Magnoliopsida</taxon>
        <taxon>eudicotyledons</taxon>
        <taxon>Gunneridae</taxon>
        <taxon>Pentapetalae</taxon>
        <taxon>rosids</taxon>
        <taxon>malvids</taxon>
        <taxon>Brassicales</taxon>
        <taxon>Brassicaceae</taxon>
        <taxon>Camelineae</taxon>
        <taxon>Arabidopsis</taxon>
    </lineage>
</organism>
<proteinExistence type="evidence at transcript level"/>
<name>BH036_ARATH</name>
<dbReference type="EMBL" id="AB010074">
    <property type="protein sequence ID" value="BAB11247.1"/>
    <property type="molecule type" value="Genomic_DNA"/>
</dbReference>
<dbReference type="EMBL" id="CP002688">
    <property type="protein sequence ID" value="AED96125.1"/>
    <property type="molecule type" value="Genomic_DNA"/>
</dbReference>
<dbReference type="EMBL" id="BT010952">
    <property type="protein sequence ID" value="AAR24730.1"/>
    <property type="molecule type" value="mRNA"/>
</dbReference>
<dbReference type="EMBL" id="BT011640">
    <property type="protein sequence ID" value="AAS47646.1"/>
    <property type="molecule type" value="mRNA"/>
</dbReference>
<dbReference type="EMBL" id="AF488575">
    <property type="status" value="NOT_ANNOTATED_CDS"/>
    <property type="molecule type" value="mRNA"/>
</dbReference>
<dbReference type="RefSeq" id="NP_199991.1">
    <property type="nucleotide sequence ID" value="NM_124557.4"/>
</dbReference>
<dbReference type="SMR" id="Q9FLI1"/>
<dbReference type="BioGRID" id="20497">
    <property type="interactions" value="5"/>
</dbReference>
<dbReference type="FunCoup" id="Q9FLI1">
    <property type="interactions" value="34"/>
</dbReference>
<dbReference type="IntAct" id="Q9FLI1">
    <property type="interactions" value="6"/>
</dbReference>
<dbReference type="STRING" id="3702.Q9FLI1"/>
<dbReference type="PaxDb" id="3702-AT5G51780.1"/>
<dbReference type="EnsemblPlants" id="AT5G51780.1">
    <property type="protein sequence ID" value="AT5G51780.1"/>
    <property type="gene ID" value="AT5G51780"/>
</dbReference>
<dbReference type="GeneID" id="835252"/>
<dbReference type="Gramene" id="AT5G51780.1">
    <property type="protein sequence ID" value="AT5G51780.1"/>
    <property type="gene ID" value="AT5G51780"/>
</dbReference>
<dbReference type="KEGG" id="ath:AT5G51780"/>
<dbReference type="Araport" id="AT5G51780"/>
<dbReference type="TAIR" id="AT5G51780">
    <property type="gene designation" value="BHLH"/>
</dbReference>
<dbReference type="eggNOG" id="ENOG502S1BU">
    <property type="taxonomic scope" value="Eukaryota"/>
</dbReference>
<dbReference type="HOGENOM" id="CLU_094733_1_1_1"/>
<dbReference type="InParanoid" id="Q9FLI1"/>
<dbReference type="OrthoDB" id="1935281at2759"/>
<dbReference type="PhylomeDB" id="Q9FLI1"/>
<dbReference type="PRO" id="PR:Q9FLI1"/>
<dbReference type="Proteomes" id="UP000006548">
    <property type="component" value="Chromosome 5"/>
</dbReference>
<dbReference type="ExpressionAtlas" id="Q9FLI1">
    <property type="expression patterns" value="baseline and differential"/>
</dbReference>
<dbReference type="GO" id="GO:0005634">
    <property type="term" value="C:nucleus"/>
    <property type="evidence" value="ECO:0007669"/>
    <property type="project" value="UniProtKB-SubCell"/>
</dbReference>
<dbReference type="GO" id="GO:0003677">
    <property type="term" value="F:DNA binding"/>
    <property type="evidence" value="ECO:0007669"/>
    <property type="project" value="UniProtKB-KW"/>
</dbReference>
<dbReference type="GO" id="GO:0003700">
    <property type="term" value="F:DNA-binding transcription factor activity"/>
    <property type="evidence" value="ECO:0000250"/>
    <property type="project" value="TAIR"/>
</dbReference>
<dbReference type="GO" id="GO:0046983">
    <property type="term" value="F:protein dimerization activity"/>
    <property type="evidence" value="ECO:0007669"/>
    <property type="project" value="InterPro"/>
</dbReference>
<dbReference type="GO" id="GO:0006355">
    <property type="term" value="P:regulation of DNA-templated transcription"/>
    <property type="evidence" value="ECO:0000304"/>
    <property type="project" value="TAIR"/>
</dbReference>
<dbReference type="GO" id="GO:0006357">
    <property type="term" value="P:regulation of transcription by RNA polymerase II"/>
    <property type="evidence" value="ECO:0007669"/>
    <property type="project" value="InterPro"/>
</dbReference>
<dbReference type="CDD" id="cd18914">
    <property type="entry name" value="bHLH_AtORG2_like"/>
    <property type="match status" value="1"/>
</dbReference>
<dbReference type="FunFam" id="4.10.280.10:FF:000085">
    <property type="entry name" value="Transcription factor bHLH126"/>
    <property type="match status" value="1"/>
</dbReference>
<dbReference type="Gene3D" id="4.10.280.10">
    <property type="entry name" value="Helix-loop-helix DNA-binding domain"/>
    <property type="match status" value="1"/>
</dbReference>
<dbReference type="InterPro" id="IPR011598">
    <property type="entry name" value="bHLH_dom"/>
</dbReference>
<dbReference type="InterPro" id="IPR036638">
    <property type="entry name" value="HLH_DNA-bd_sf"/>
</dbReference>
<dbReference type="InterPro" id="IPR015660">
    <property type="entry name" value="MASH1/Ascl1a-like"/>
</dbReference>
<dbReference type="PANTHER" id="PTHR13935">
    <property type="entry name" value="ACHAETE-SCUTE TRANSCRIPTION FACTOR-RELATED"/>
    <property type="match status" value="1"/>
</dbReference>
<dbReference type="PANTHER" id="PTHR13935:SF130">
    <property type="entry name" value="TRANSCRIPTION FACTOR BHLH36"/>
    <property type="match status" value="1"/>
</dbReference>
<dbReference type="Pfam" id="PF00010">
    <property type="entry name" value="HLH"/>
    <property type="match status" value="1"/>
</dbReference>
<dbReference type="SMART" id="SM00353">
    <property type="entry name" value="HLH"/>
    <property type="match status" value="1"/>
</dbReference>
<dbReference type="SUPFAM" id="SSF47459">
    <property type="entry name" value="HLH, helix-loop-helix DNA-binding domain"/>
    <property type="match status" value="1"/>
</dbReference>
<dbReference type="PROSITE" id="PS50888">
    <property type="entry name" value="BHLH"/>
    <property type="match status" value="1"/>
</dbReference>